<organism>
    <name type="scientific">Gluconacetobacter diazotrophicus (strain ATCC 49037 / DSM 5601 / CCUG 37298 / CIP 103539 / LMG 7603 / PAl5)</name>
    <dbReference type="NCBI Taxonomy" id="272568"/>
    <lineage>
        <taxon>Bacteria</taxon>
        <taxon>Pseudomonadati</taxon>
        <taxon>Pseudomonadota</taxon>
        <taxon>Alphaproteobacteria</taxon>
        <taxon>Acetobacterales</taxon>
        <taxon>Acetobacteraceae</taxon>
        <taxon>Gluconacetobacter</taxon>
    </lineage>
</organism>
<proteinExistence type="inferred from homology"/>
<comment type="catalytic activity">
    <reaction evidence="1">
        <text>5-amino-1-(5-phospho-D-ribosyl)imidazole-4-carboxylate + L-aspartate + ATP = (2S)-2-[5-amino-1-(5-phospho-beta-D-ribosyl)imidazole-4-carboxamido]succinate + ADP + phosphate + 2 H(+)</text>
        <dbReference type="Rhea" id="RHEA:22628"/>
        <dbReference type="ChEBI" id="CHEBI:15378"/>
        <dbReference type="ChEBI" id="CHEBI:29991"/>
        <dbReference type="ChEBI" id="CHEBI:30616"/>
        <dbReference type="ChEBI" id="CHEBI:43474"/>
        <dbReference type="ChEBI" id="CHEBI:58443"/>
        <dbReference type="ChEBI" id="CHEBI:77657"/>
        <dbReference type="ChEBI" id="CHEBI:456216"/>
        <dbReference type="EC" id="6.3.2.6"/>
    </reaction>
</comment>
<comment type="pathway">
    <text evidence="1">Purine metabolism; IMP biosynthesis via de novo pathway; 5-amino-1-(5-phospho-D-ribosyl)imidazole-4-carboxamide from 5-amino-1-(5-phospho-D-ribosyl)imidazole-4-carboxylate: step 1/2.</text>
</comment>
<comment type="similarity">
    <text evidence="1">Belongs to the SAICAR synthetase family.</text>
</comment>
<keyword id="KW-0067">ATP-binding</keyword>
<keyword id="KW-0436">Ligase</keyword>
<keyword id="KW-0547">Nucleotide-binding</keyword>
<keyword id="KW-0658">Purine biosynthesis</keyword>
<keyword id="KW-1185">Reference proteome</keyword>
<name>PUR7_GLUDA</name>
<gene>
    <name evidence="1" type="primary">purC</name>
    <name type="ordered locus">GDI1956</name>
    <name type="ordered locus">Gdia_0181</name>
</gene>
<sequence>MARRRQLYEGKAKILFEGPEPGTLVQYFKDDATAGNGAKKGIITGKGVLNNRISEHLMLRLHDIGIPTHFIRRLNMREQLIREVEIIPLEVVVRNVAAGSLAKRLGIPEGTRLPRTIIEYYYKNDSLNDPMVSEEHITAFGWACTHDLDDMVALTMRTNDFLSGLFVGIGITLVDFKLEFGRLWEGEDMRIVLADEISPDNCRLWDAKTSEKLDKDRFRRDMGRVEEAYQEVAWRLGILPEATNSDMKGPEVMQ</sequence>
<protein>
    <recommendedName>
        <fullName evidence="1">Phosphoribosylaminoimidazole-succinocarboxamide synthase</fullName>
        <ecNumber evidence="1">6.3.2.6</ecNumber>
    </recommendedName>
    <alternativeName>
        <fullName evidence="1">SAICAR synthetase</fullName>
    </alternativeName>
</protein>
<reference key="1">
    <citation type="journal article" date="2009" name="BMC Genomics">
        <title>Complete genome sequence of the sugarcane nitrogen-fixing endophyte Gluconacetobacter diazotrophicus Pal5.</title>
        <authorList>
            <person name="Bertalan M."/>
            <person name="Albano R."/>
            <person name="de Padua V."/>
            <person name="Rouws L."/>
            <person name="Rojas C."/>
            <person name="Hemerly A."/>
            <person name="Teixeira K."/>
            <person name="Schwab S."/>
            <person name="Araujo J."/>
            <person name="Oliveira A."/>
            <person name="Franca L."/>
            <person name="Magalhaes V."/>
            <person name="Alqueres S."/>
            <person name="Cardoso A."/>
            <person name="Almeida W."/>
            <person name="Loureiro M.M."/>
            <person name="Nogueira E."/>
            <person name="Cidade D."/>
            <person name="Oliveira D."/>
            <person name="Simao T."/>
            <person name="Macedo J."/>
            <person name="Valadao A."/>
            <person name="Dreschsel M."/>
            <person name="Freitas F."/>
            <person name="Vidal M."/>
            <person name="Guedes H."/>
            <person name="Rodrigues E."/>
            <person name="Meneses C."/>
            <person name="Brioso P."/>
            <person name="Pozzer L."/>
            <person name="Figueiredo D."/>
            <person name="Montano H."/>
            <person name="Junior J."/>
            <person name="de Souza Filho G."/>
            <person name="Martin Quintana Flores V."/>
            <person name="Ferreira B."/>
            <person name="Branco A."/>
            <person name="Gonzalez P."/>
            <person name="Guillobel H."/>
            <person name="Lemos M."/>
            <person name="Seibel L."/>
            <person name="Macedo J."/>
            <person name="Alves-Ferreira M."/>
            <person name="Sachetto-Martins G."/>
            <person name="Coelho A."/>
            <person name="Santos E."/>
            <person name="Amaral G."/>
            <person name="Neves A."/>
            <person name="Pacheco A.B."/>
            <person name="Carvalho D."/>
            <person name="Lery L."/>
            <person name="Bisch P."/>
            <person name="Rossle S.C."/>
            <person name="Urmenyi T."/>
            <person name="Rael Pereira A."/>
            <person name="Silva R."/>
            <person name="Rondinelli E."/>
            <person name="von Kruger W."/>
            <person name="Martins O."/>
            <person name="Baldani J.I."/>
            <person name="Ferreira P.C."/>
        </authorList>
    </citation>
    <scope>NUCLEOTIDE SEQUENCE [LARGE SCALE GENOMIC DNA]</scope>
    <source>
        <strain>ATCC 49037 / DSM 5601 / CCUG 37298 / CIP 103539 / LMG 7603 / PAl5</strain>
    </source>
</reference>
<reference key="2">
    <citation type="journal article" date="2010" name="Stand. Genomic Sci.">
        <title>Two genome sequences of the same bacterial strain, Gluconacetobacter diazotrophicus PAl 5, suggest a new standard in genome sequence submission.</title>
        <authorList>
            <person name="Giongo A."/>
            <person name="Tyler H.L."/>
            <person name="Zipperer U.N."/>
            <person name="Triplett E.W."/>
        </authorList>
    </citation>
    <scope>NUCLEOTIDE SEQUENCE [LARGE SCALE GENOMIC DNA]</scope>
    <source>
        <strain>ATCC 49037 / DSM 5601 / CCUG 37298 / CIP 103539 / LMG 7603 / PAl5</strain>
    </source>
</reference>
<feature type="chain" id="PRO_1000076455" description="Phosphoribosylaminoimidazole-succinocarboxamide synthase">
    <location>
        <begin position="1"/>
        <end position="254"/>
    </location>
</feature>
<accession>A9HJF3</accession>
<accession>B5ZK40</accession>
<dbReference type="EC" id="6.3.2.6" evidence="1"/>
<dbReference type="EMBL" id="AM889285">
    <property type="protein sequence ID" value="CAP55899.1"/>
    <property type="molecule type" value="Genomic_DNA"/>
</dbReference>
<dbReference type="EMBL" id="CP001189">
    <property type="protein sequence ID" value="ACI49979.1"/>
    <property type="molecule type" value="Genomic_DNA"/>
</dbReference>
<dbReference type="RefSeq" id="WP_012225610.1">
    <property type="nucleotide sequence ID" value="NC_010125.1"/>
</dbReference>
<dbReference type="SMR" id="A9HJF3"/>
<dbReference type="STRING" id="272568.GDI1956"/>
<dbReference type="KEGG" id="gdi:GDI1956"/>
<dbReference type="KEGG" id="gdj:Gdia_0181"/>
<dbReference type="eggNOG" id="COG0152">
    <property type="taxonomic scope" value="Bacteria"/>
</dbReference>
<dbReference type="HOGENOM" id="CLU_061495_2_0_5"/>
<dbReference type="OrthoDB" id="9801549at2"/>
<dbReference type="UniPathway" id="UPA00074">
    <property type="reaction ID" value="UER00131"/>
</dbReference>
<dbReference type="Proteomes" id="UP000001176">
    <property type="component" value="Chromosome"/>
</dbReference>
<dbReference type="GO" id="GO:0005829">
    <property type="term" value="C:cytosol"/>
    <property type="evidence" value="ECO:0007669"/>
    <property type="project" value="TreeGrafter"/>
</dbReference>
<dbReference type="GO" id="GO:0005524">
    <property type="term" value="F:ATP binding"/>
    <property type="evidence" value="ECO:0007669"/>
    <property type="project" value="UniProtKB-KW"/>
</dbReference>
<dbReference type="GO" id="GO:0004639">
    <property type="term" value="F:phosphoribosylaminoimidazolesuccinocarboxamide synthase activity"/>
    <property type="evidence" value="ECO:0007669"/>
    <property type="project" value="UniProtKB-UniRule"/>
</dbReference>
<dbReference type="GO" id="GO:0006189">
    <property type="term" value="P:'de novo' IMP biosynthetic process"/>
    <property type="evidence" value="ECO:0007669"/>
    <property type="project" value="UniProtKB-UniRule"/>
</dbReference>
<dbReference type="GO" id="GO:0009236">
    <property type="term" value="P:cobalamin biosynthetic process"/>
    <property type="evidence" value="ECO:0007669"/>
    <property type="project" value="InterPro"/>
</dbReference>
<dbReference type="CDD" id="cd01415">
    <property type="entry name" value="SAICAR_synt_PurC"/>
    <property type="match status" value="1"/>
</dbReference>
<dbReference type="FunFam" id="3.30.470.20:FF:000006">
    <property type="entry name" value="Phosphoribosylaminoimidazole-succinocarboxamide synthase"/>
    <property type="match status" value="1"/>
</dbReference>
<dbReference type="Gene3D" id="3.30.470.20">
    <property type="entry name" value="ATP-grasp fold, B domain"/>
    <property type="match status" value="1"/>
</dbReference>
<dbReference type="Gene3D" id="3.30.200.20">
    <property type="entry name" value="Phosphorylase Kinase, domain 1"/>
    <property type="match status" value="1"/>
</dbReference>
<dbReference type="HAMAP" id="MF_00137">
    <property type="entry name" value="SAICAR_synth"/>
    <property type="match status" value="1"/>
</dbReference>
<dbReference type="InterPro" id="IPR028923">
    <property type="entry name" value="SAICAR_synt/ADE2_N"/>
</dbReference>
<dbReference type="InterPro" id="IPR033934">
    <property type="entry name" value="SAICAR_synt_PurC"/>
</dbReference>
<dbReference type="InterPro" id="IPR001636">
    <property type="entry name" value="SAICAR_synth"/>
</dbReference>
<dbReference type="InterPro" id="IPR050089">
    <property type="entry name" value="SAICAR_synthetase"/>
</dbReference>
<dbReference type="InterPro" id="IPR018236">
    <property type="entry name" value="SAICAR_synthetase_CS"/>
</dbReference>
<dbReference type="NCBIfam" id="TIGR00081">
    <property type="entry name" value="purC"/>
    <property type="match status" value="1"/>
</dbReference>
<dbReference type="PANTHER" id="PTHR43599">
    <property type="entry name" value="MULTIFUNCTIONAL PROTEIN ADE2"/>
    <property type="match status" value="1"/>
</dbReference>
<dbReference type="PANTHER" id="PTHR43599:SF3">
    <property type="entry name" value="SI:DKEY-6E2.2"/>
    <property type="match status" value="1"/>
</dbReference>
<dbReference type="Pfam" id="PF01259">
    <property type="entry name" value="SAICAR_synt"/>
    <property type="match status" value="1"/>
</dbReference>
<dbReference type="SUPFAM" id="SSF56104">
    <property type="entry name" value="SAICAR synthase-like"/>
    <property type="match status" value="1"/>
</dbReference>
<dbReference type="PROSITE" id="PS01057">
    <property type="entry name" value="SAICAR_SYNTHETASE_1"/>
    <property type="match status" value="1"/>
</dbReference>
<dbReference type="PROSITE" id="PS01058">
    <property type="entry name" value="SAICAR_SYNTHETASE_2"/>
    <property type="match status" value="1"/>
</dbReference>
<evidence type="ECO:0000255" key="1">
    <source>
        <dbReference type="HAMAP-Rule" id="MF_00137"/>
    </source>
</evidence>